<evidence type="ECO:0000255" key="1">
    <source>
        <dbReference type="HAMAP-Rule" id="MF_01833"/>
    </source>
</evidence>
<reference key="1">
    <citation type="journal article" date="2005" name="J. Bacteriol.">
        <title>The genome of Sulfolobus acidocaldarius, a model organism of the Crenarchaeota.</title>
        <authorList>
            <person name="Chen L."/>
            <person name="Bruegger K."/>
            <person name="Skovgaard M."/>
            <person name="Redder P."/>
            <person name="She Q."/>
            <person name="Torarinsson E."/>
            <person name="Greve B."/>
            <person name="Awayez M."/>
            <person name="Zibat A."/>
            <person name="Klenk H.-P."/>
            <person name="Garrett R.A."/>
        </authorList>
    </citation>
    <scope>NUCLEOTIDE SEQUENCE [LARGE SCALE GENOMIC DNA]</scope>
    <source>
        <strain>ATCC 33909 / DSM 639 / JCM 8929 / NBRC 15157 / NCIMB 11770</strain>
    </source>
</reference>
<keyword id="KW-0456">Lyase</keyword>
<keyword id="KW-1185">Reference proteome</keyword>
<keyword id="KW-0819">tRNA processing</keyword>
<proteinExistence type="inferred from homology"/>
<dbReference type="EC" id="4.6.1.16" evidence="1"/>
<dbReference type="EMBL" id="CP000077">
    <property type="protein sequence ID" value="AAY80225.1"/>
    <property type="molecule type" value="Genomic_DNA"/>
</dbReference>
<dbReference type="RefSeq" id="WP_011277727.1">
    <property type="nucleotide sequence ID" value="NC_007181.1"/>
</dbReference>
<dbReference type="SMR" id="Q4JAF4"/>
<dbReference type="STRING" id="330779.Saci_0858"/>
<dbReference type="GeneID" id="14551371"/>
<dbReference type="GeneID" id="78441205"/>
<dbReference type="KEGG" id="sai:Saci_0858"/>
<dbReference type="PATRIC" id="fig|330779.12.peg.821"/>
<dbReference type="eggNOG" id="arCOG01701">
    <property type="taxonomic scope" value="Archaea"/>
</dbReference>
<dbReference type="HOGENOM" id="CLU_114393_0_0_2"/>
<dbReference type="Proteomes" id="UP000001018">
    <property type="component" value="Chromosome"/>
</dbReference>
<dbReference type="GO" id="GO:0005737">
    <property type="term" value="C:cytoplasm"/>
    <property type="evidence" value="ECO:0007669"/>
    <property type="project" value="TreeGrafter"/>
</dbReference>
<dbReference type="GO" id="GO:0016829">
    <property type="term" value="F:lyase activity"/>
    <property type="evidence" value="ECO:0007669"/>
    <property type="project" value="UniProtKB-KW"/>
</dbReference>
<dbReference type="GO" id="GO:0003676">
    <property type="term" value="F:nucleic acid binding"/>
    <property type="evidence" value="ECO:0007669"/>
    <property type="project" value="InterPro"/>
</dbReference>
<dbReference type="GO" id="GO:0000213">
    <property type="term" value="F:tRNA-intron endonuclease activity"/>
    <property type="evidence" value="ECO:0007669"/>
    <property type="project" value="UniProtKB-UniRule"/>
</dbReference>
<dbReference type="GO" id="GO:0006388">
    <property type="term" value="P:tRNA splicing, via endonucleolytic cleavage and ligation"/>
    <property type="evidence" value="ECO:0007669"/>
    <property type="project" value="UniProtKB-UniRule"/>
</dbReference>
<dbReference type="CDD" id="cd22363">
    <property type="entry name" value="tRNA-intron_lyase_C"/>
    <property type="match status" value="1"/>
</dbReference>
<dbReference type="FunFam" id="3.40.1350.10:FF:000006">
    <property type="entry name" value="tRNA-splicing endonuclease"/>
    <property type="match status" value="1"/>
</dbReference>
<dbReference type="Gene3D" id="3.40.1350.10">
    <property type="match status" value="1"/>
</dbReference>
<dbReference type="Gene3D" id="3.40.1170.20">
    <property type="entry name" value="tRNA intron endonuclease, N-terminal domain"/>
    <property type="match status" value="1"/>
</dbReference>
<dbReference type="HAMAP" id="MF_01833">
    <property type="entry name" value="EndA_short"/>
    <property type="match status" value="1"/>
</dbReference>
<dbReference type="InterPro" id="IPR011856">
    <property type="entry name" value="tRNA_endonuc-like_dom_sf"/>
</dbReference>
<dbReference type="InterPro" id="IPR036167">
    <property type="entry name" value="tRNA_intron_Endo_cat-like_sf"/>
</dbReference>
<dbReference type="InterPro" id="IPR006677">
    <property type="entry name" value="tRNA_intron_Endonuc_cat-like"/>
</dbReference>
<dbReference type="InterPro" id="IPR006678">
    <property type="entry name" value="tRNA_intron_Endonuc_N"/>
</dbReference>
<dbReference type="InterPro" id="IPR036740">
    <property type="entry name" value="tRNA_intron_Endonuc_N_sf"/>
</dbReference>
<dbReference type="InterPro" id="IPR006676">
    <property type="entry name" value="tRNA_splic"/>
</dbReference>
<dbReference type="InterPro" id="IPR016442">
    <property type="entry name" value="tRNA_splic_arch_short"/>
</dbReference>
<dbReference type="NCBIfam" id="TIGR00324">
    <property type="entry name" value="endA"/>
    <property type="match status" value="1"/>
</dbReference>
<dbReference type="PANTHER" id="PTHR21227">
    <property type="entry name" value="TRNA-SPLICING ENDONUCLEASE SUBUNIT SEN2"/>
    <property type="match status" value="1"/>
</dbReference>
<dbReference type="PANTHER" id="PTHR21227:SF0">
    <property type="entry name" value="TRNA-SPLICING ENDONUCLEASE SUBUNIT SEN2"/>
    <property type="match status" value="1"/>
</dbReference>
<dbReference type="Pfam" id="PF01974">
    <property type="entry name" value="tRNA_int_endo"/>
    <property type="match status" value="1"/>
</dbReference>
<dbReference type="Pfam" id="PF02778">
    <property type="entry name" value="tRNA_int_endo_N"/>
    <property type="match status" value="1"/>
</dbReference>
<dbReference type="PIRSF" id="PIRSF005285">
    <property type="entry name" value="tRNA_splic_archaea"/>
    <property type="match status" value="1"/>
</dbReference>
<dbReference type="SUPFAM" id="SSF53032">
    <property type="entry name" value="tRNA-intron endonuclease catalytic domain-like"/>
    <property type="match status" value="1"/>
</dbReference>
<dbReference type="SUPFAM" id="SSF55267">
    <property type="entry name" value="tRNA-intron endonuclease N-terminal domain-like"/>
    <property type="match status" value="1"/>
</dbReference>
<protein>
    <recommendedName>
        <fullName evidence="1">tRNA-splicing endonuclease</fullName>
        <ecNumber evidence="1">4.6.1.16</ecNumber>
    </recommendedName>
    <alternativeName>
        <fullName evidence="1">tRNA-intron endonuclease</fullName>
    </alternativeName>
</protein>
<feature type="chain" id="PRO_0000109480" description="tRNA-splicing endonuclease">
    <location>
        <begin position="1"/>
        <end position="181"/>
    </location>
</feature>
<feature type="active site" evidence="1">
    <location>
        <position position="118"/>
    </location>
</feature>
<feature type="active site" evidence="1">
    <location>
        <position position="126"/>
    </location>
</feature>
<feature type="active site" evidence="1">
    <location>
        <position position="157"/>
    </location>
</feature>
<organism>
    <name type="scientific">Sulfolobus acidocaldarius (strain ATCC 33909 / DSM 639 / JCM 8929 / NBRC 15157 / NCIMB 11770)</name>
    <dbReference type="NCBI Taxonomy" id="330779"/>
    <lineage>
        <taxon>Archaea</taxon>
        <taxon>Thermoproteota</taxon>
        <taxon>Thermoprotei</taxon>
        <taxon>Sulfolobales</taxon>
        <taxon>Sulfolobaceae</taxon>
        <taxon>Sulfolobus</taxon>
    </lineage>
</organism>
<accession>Q4JAF4</accession>
<gene>
    <name evidence="1" type="primary">endA</name>
    <name type="ordered locus">Saci_0858</name>
</gene>
<name>ENDA_SULAC</name>
<sequence length="181" mass="20891">MIQGEILGDKVLINDVEKAKEIYKLGYYGKPLDITKPKSPEDIKKPLILSLIEALYLSKKKIIEVIRDGKVIDDALLYKIGMENIPRFELLYTVYEDLREKKFVVRSGMKYGADFAIYTVAPGLEHAPYLVIAIDEEQEISPNEILGFGRVSHSTRKNLILSIVNQRNRSIRYIMFKWLKL</sequence>
<comment type="function">
    <text evidence="1">Endonuclease that removes tRNA introns. Cleaves pre-tRNA at the 5'- and 3'-splice sites to release the intron. The products are an intron and two tRNA half-molecules bearing 2',3' cyclic phosphate and 5'-OH termini. Recognizes a pseudosymmetric substrate in which 2 bulged loops of 3 bases are separated by a stem of 4 bp.</text>
</comment>
<comment type="catalytic activity">
    <reaction evidence="1">
        <text>pretRNA = a 3'-half-tRNA molecule with a 5'-OH end + a 5'-half-tRNA molecule with a 2',3'-cyclic phosphate end + an intron with a 2',3'-cyclic phosphate and a 5'-hydroxyl terminus.</text>
        <dbReference type="EC" id="4.6.1.16"/>
    </reaction>
</comment>
<comment type="subunit">
    <text evidence="1">Homotetramer; although the tetramer contains four active sites, only two participate in the cleavage. Therefore, it should be considered as a dimer of dimers.</text>
</comment>
<comment type="similarity">
    <text evidence="1">Belongs to the tRNA-intron endonuclease family. Archaeal short subfamily.</text>
</comment>